<dbReference type="EC" id="3.1.1.1"/>
<dbReference type="EC" id="4.2.1.105"/>
<dbReference type="EMBL" id="AB154415">
    <property type="protein sequence ID" value="BAD80840.1"/>
    <property type="molecule type" value="mRNA"/>
</dbReference>
<dbReference type="EMBL" id="BT097440">
    <property type="protein sequence ID" value="ACU22699.1"/>
    <property type="molecule type" value="mRNA"/>
</dbReference>
<dbReference type="EMBL" id="CM000834">
    <property type="status" value="NOT_ANNOTATED_CDS"/>
    <property type="molecule type" value="Genomic_DNA"/>
</dbReference>
<dbReference type="RefSeq" id="NP_001237228.1">
    <property type="nucleotide sequence ID" value="NM_001250299.2"/>
</dbReference>
<dbReference type="RefSeq" id="NP_001389539.1">
    <property type="nucleotide sequence ID" value="NM_001402610.1"/>
</dbReference>
<dbReference type="SMR" id="Q5NUF3"/>
<dbReference type="STRING" id="3847.Q5NUF3"/>
<dbReference type="ESTHER" id="soybn-q5nuf3">
    <property type="family name" value="Plant_carboxylesterase"/>
</dbReference>
<dbReference type="PaxDb" id="3847-GLYMA01G45020.1"/>
<dbReference type="EnsemblPlants" id="KRH77876">
    <property type="protein sequence ID" value="KRH77876"/>
    <property type="gene ID" value="GLYMA_01G239600"/>
</dbReference>
<dbReference type="GeneID" id="547489"/>
<dbReference type="Gramene" id="KRH77876">
    <property type="protein sequence ID" value="KRH77876"/>
    <property type="gene ID" value="GLYMA_01G239600"/>
</dbReference>
<dbReference type="KEGG" id="gmx:547489"/>
<dbReference type="eggNOG" id="KOG1515">
    <property type="taxonomic scope" value="Eukaryota"/>
</dbReference>
<dbReference type="HOGENOM" id="CLU_012494_22_0_1"/>
<dbReference type="InParanoid" id="Q5NUF3"/>
<dbReference type="OMA" id="IDNPWIN"/>
<dbReference type="OrthoDB" id="408631at2759"/>
<dbReference type="SABIO-RK" id="Q5NUF3"/>
<dbReference type="UniPathway" id="UPA00154"/>
<dbReference type="Proteomes" id="UP000008827">
    <property type="component" value="Chromosome 1"/>
</dbReference>
<dbReference type="GO" id="GO:0033987">
    <property type="term" value="F:2-hydroxyisoflavanone dehydratase activity"/>
    <property type="evidence" value="ECO:0000314"/>
    <property type="project" value="UniProtKB"/>
</dbReference>
<dbReference type="GO" id="GO:0106435">
    <property type="term" value="F:carboxylesterase activity"/>
    <property type="evidence" value="ECO:0000314"/>
    <property type="project" value="UniProtKB"/>
</dbReference>
<dbReference type="GO" id="GO:0052689">
    <property type="term" value="F:carboxylic ester hydrolase activity"/>
    <property type="evidence" value="ECO:0000318"/>
    <property type="project" value="GO_Central"/>
</dbReference>
<dbReference type="GO" id="GO:0009813">
    <property type="term" value="P:flavonoid biosynthetic process"/>
    <property type="evidence" value="ECO:0007669"/>
    <property type="project" value="UniProtKB-UniPathway"/>
</dbReference>
<dbReference type="GO" id="GO:0009717">
    <property type="term" value="P:isoflavonoid biosynthetic process"/>
    <property type="evidence" value="ECO:0000314"/>
    <property type="project" value="UniProtKB"/>
</dbReference>
<dbReference type="GO" id="GO:0046287">
    <property type="term" value="P:isoflavonoid metabolic process"/>
    <property type="evidence" value="ECO:0000314"/>
    <property type="project" value="UniProtKB"/>
</dbReference>
<dbReference type="FunFam" id="3.40.50.1820:FF:000376">
    <property type="entry name" value="Probable carboxylesterase 12"/>
    <property type="match status" value="1"/>
</dbReference>
<dbReference type="Gene3D" id="3.40.50.1820">
    <property type="entry name" value="alpha/beta hydrolase"/>
    <property type="match status" value="1"/>
</dbReference>
<dbReference type="InterPro" id="IPR013094">
    <property type="entry name" value="AB_hydrolase_3"/>
</dbReference>
<dbReference type="InterPro" id="IPR029058">
    <property type="entry name" value="AB_hydrolase_fold"/>
</dbReference>
<dbReference type="InterPro" id="IPR050466">
    <property type="entry name" value="Carboxylest/Gibb_receptor"/>
</dbReference>
<dbReference type="InterPro" id="IPR002168">
    <property type="entry name" value="Lipase_GDXG_HIS_AS"/>
</dbReference>
<dbReference type="PANTHER" id="PTHR23024:SF368">
    <property type="entry name" value="2-HYDROXYISOFLAVANONE DEHYDRATASE"/>
    <property type="match status" value="1"/>
</dbReference>
<dbReference type="PANTHER" id="PTHR23024">
    <property type="entry name" value="ARYLACETAMIDE DEACETYLASE"/>
    <property type="match status" value="1"/>
</dbReference>
<dbReference type="Pfam" id="PF07859">
    <property type="entry name" value="Abhydrolase_3"/>
    <property type="match status" value="1"/>
</dbReference>
<dbReference type="SUPFAM" id="SSF53474">
    <property type="entry name" value="alpha/beta-Hydrolases"/>
    <property type="match status" value="1"/>
</dbReference>
<dbReference type="PROSITE" id="PS01173">
    <property type="entry name" value="LIPASE_GDXG_HIS"/>
    <property type="match status" value="1"/>
</dbReference>
<feature type="chain" id="PRO_0000424101" description="2-hydroxyisoflavanone dehydratase">
    <location>
        <begin position="1"/>
        <end position="319"/>
    </location>
</feature>
<feature type="short sequence motif" description="Involved in the stabilization of the negatively charged intermediate by the formation of the oxyanion hole" evidence="3">
    <location>
        <begin position="77"/>
        <end position="79"/>
    </location>
</feature>
<feature type="active site" description="Proton acceptor" evidence="3">
    <location>
        <position position="164"/>
    </location>
</feature>
<feature type="active site" evidence="3">
    <location>
        <position position="263"/>
    </location>
</feature>
<feature type="active site" description="Proton donor/acceptor" evidence="3">
    <location>
        <position position="295"/>
    </location>
</feature>
<feature type="mutagenesis site" description="Reduction of both dehydratase and carboxylesterase activities." evidence="1">
    <original>G</original>
    <variation>A</variation>
    <location>
        <position position="78"/>
    </location>
</feature>
<feature type="mutagenesis site" description="Reduction of both dehydratase and carboxylesterase activities." evidence="1">
    <original>G</original>
    <variation>A</variation>
    <location>
        <position position="79"/>
    </location>
</feature>
<feature type="mutagenesis site" description="Reduction of both dehydratase and carboxylesterase activities." evidence="1">
    <original>T</original>
    <variation>A</variation>
    <variation>S</variation>
    <location>
        <position position="164"/>
    </location>
</feature>
<feature type="mutagenesis site" description="Complete loss of both dehydratase and carboxylesterase activities." evidence="1">
    <original>D</original>
    <variation>N</variation>
    <location>
        <position position="263"/>
    </location>
</feature>
<feature type="mutagenesis site" description="Complete loss of both dehydratase and carboxylesterase activities." evidence="1">
    <original>H</original>
    <variation>A</variation>
    <location>
        <position position="295"/>
    </location>
</feature>
<keyword id="KW-0284">Flavonoid biosynthesis</keyword>
<keyword id="KW-0378">Hydrolase</keyword>
<keyword id="KW-0456">Lyase</keyword>
<keyword id="KW-1185">Reference proteome</keyword>
<name>HIDH_SOYBN</name>
<proteinExistence type="evidence at protein level"/>
<protein>
    <recommendedName>
        <fullName>2-hydroxyisoflavanone dehydratase</fullName>
        <ecNumber>3.1.1.1</ecNumber>
        <ecNumber>4.2.1.105</ecNumber>
    </recommendedName>
    <alternativeName>
        <fullName>Carboxylesterase HIDH</fullName>
    </alternativeName>
</protein>
<accession>Q5NUF3</accession>
<reference key="1">
    <citation type="journal article" date="2005" name="Plant Physiol.">
        <title>Molecular and biochemical characterization of 2-hydroxyisoflavanone dehydratase. Involvement of carboxylesterase-like proteins in leguminous isoflavone biosynthesis.</title>
        <authorList>
            <person name="Akashi T."/>
            <person name="Aoki T."/>
            <person name="Ayabe S."/>
        </authorList>
    </citation>
    <scope>NUCLEOTIDE SEQUENCE [MRNA]</scope>
    <scope>FUNCTION</scope>
    <scope>CATALYTIC ACTIVITY</scope>
    <scope>MOTIF</scope>
    <scope>MUTAGENESIS OF GLY-78; GLY-79; THR-164; ASP-263 AND HIS-295</scope>
    <scope>BIOPHYSICOCHEMICAL PROPERTIES</scope>
    <scope>REACTION MECHANISM</scope>
    <source>
        <tissue>Seedling</tissue>
    </source>
</reference>
<reference key="2">
    <citation type="submission" date="2009-08" db="EMBL/GenBank/DDBJ databases">
        <authorList>
            <person name="Cheung F."/>
            <person name="Xiao Y."/>
            <person name="Chan A."/>
            <person name="Moskal W."/>
            <person name="Town C.D."/>
        </authorList>
    </citation>
    <scope>NUCLEOTIDE SEQUENCE [MRNA]</scope>
</reference>
<reference key="3">
    <citation type="journal article" date="2010" name="Nature">
        <title>Genome sequence of the palaeopolyploid soybean.</title>
        <authorList>
            <person name="Schmutz J."/>
            <person name="Cannon S.B."/>
            <person name="Schlueter J."/>
            <person name="Ma J."/>
            <person name="Mitros T."/>
            <person name="Nelson W."/>
            <person name="Hyten D.L."/>
            <person name="Song Q."/>
            <person name="Thelen J.J."/>
            <person name="Cheng J."/>
            <person name="Xu D."/>
            <person name="Hellsten U."/>
            <person name="May G.D."/>
            <person name="Yu Y."/>
            <person name="Sakurai T."/>
            <person name="Umezawa T."/>
            <person name="Bhattacharyya M.K."/>
            <person name="Sandhu D."/>
            <person name="Valliyodan B."/>
            <person name="Lindquist E."/>
            <person name="Peto M."/>
            <person name="Grant D."/>
            <person name="Shu S."/>
            <person name="Goodstein D."/>
            <person name="Barry K."/>
            <person name="Futrell-Griggs M."/>
            <person name="Abernathy B."/>
            <person name="Du J."/>
            <person name="Tian Z."/>
            <person name="Zhu L."/>
            <person name="Gill N."/>
            <person name="Joshi T."/>
            <person name="Libault M."/>
            <person name="Sethuraman A."/>
            <person name="Zhang X.-C."/>
            <person name="Shinozaki K."/>
            <person name="Nguyen H.T."/>
            <person name="Wing R.A."/>
            <person name="Cregan P."/>
            <person name="Specht J."/>
            <person name="Grimwood J."/>
            <person name="Rokhsar D."/>
            <person name="Stacey G."/>
            <person name="Shoemaker R.C."/>
            <person name="Jackson S.A."/>
        </authorList>
    </citation>
    <scope>NUCLEOTIDE SEQUENCE [LARGE SCALE GENOMIC DNA]</scope>
    <source>
        <strain>cv. Williams 82</strain>
    </source>
</reference>
<evidence type="ECO:0000269" key="1">
    <source>
    </source>
</evidence>
<evidence type="ECO:0000305" key="2"/>
<evidence type="ECO:0000305" key="3">
    <source>
    </source>
</evidence>
<sequence length="319" mass="35138">MAKEIVKELLPLIRVYKDGSVERLLSSENVAASPEDPQTGVSSKDIVIADNPYVSARIFLPKSHHTNNKLPIFLYFHGGAFCVESAFSFFVHRYLNILASEANIIAISVDFRLLPHHPIPAAYEDGWTTLKWIASHANNTNTTNPEPWLLNHADFTKVYVGGETSGANIAHNLLLRAGNESLPGDLKILGGLLCCPFFWGSKPIGSEAVEGHEQSLAMKVWNFACPDAPGGIDNPWINPCVPGAPSLATLACSKLLVTITGKDEFRDRDILYHHTVEQSGWQGELQLFDAGDEEHAFQLFKPETHLAKAMIKRLASFLV</sequence>
<comment type="function">
    <text evidence="1">Dehydratase that mediates the biosynthesis of isoflavonoids. Can use both 4'-hydroxylated and 4'-methoxylated 2-hydroxyisoflavanones as substrates. Also has a slight carboxylesterase activity toward p-nitrophenyl butyrate.</text>
</comment>
<comment type="catalytic activity">
    <reaction evidence="1">
        <text>(2R,3S)-2,4',7-trihydroxyisoflavanone = daidzein + H2O + H(+)</text>
        <dbReference type="Rhea" id="RHEA:16445"/>
        <dbReference type="ChEBI" id="CHEBI:15377"/>
        <dbReference type="ChEBI" id="CHEBI:15378"/>
        <dbReference type="ChEBI" id="CHEBI:63325"/>
        <dbReference type="ChEBI" id="CHEBI:77764"/>
        <dbReference type="EC" id="4.2.1.105"/>
    </reaction>
</comment>
<comment type="catalytic activity">
    <reaction evidence="1">
        <text>2-hydroxy-2,3-dihydrogenistein = genistein + H2O + H(+)</text>
        <dbReference type="Rhea" id="RHEA:36803"/>
        <dbReference type="ChEBI" id="CHEBI:15377"/>
        <dbReference type="ChEBI" id="CHEBI:15378"/>
        <dbReference type="ChEBI" id="CHEBI:31080"/>
        <dbReference type="ChEBI" id="CHEBI:74224"/>
        <dbReference type="EC" id="4.2.1.105"/>
    </reaction>
</comment>
<comment type="catalytic activity">
    <reaction evidence="1">
        <text>a carboxylic ester + H2O = an alcohol + a carboxylate + H(+)</text>
        <dbReference type="Rhea" id="RHEA:21164"/>
        <dbReference type="ChEBI" id="CHEBI:15377"/>
        <dbReference type="ChEBI" id="CHEBI:15378"/>
        <dbReference type="ChEBI" id="CHEBI:29067"/>
        <dbReference type="ChEBI" id="CHEBI:30879"/>
        <dbReference type="ChEBI" id="CHEBI:33308"/>
        <dbReference type="EC" id="3.1.1.1"/>
    </reaction>
</comment>
<comment type="biophysicochemical properties">
    <kinetics>
        <KM evidence="1">29 uM for 2,7-dihydroxy-4'-methoxyisoflavanone (at pH 7.5 and 30 degrees Celsius)</KM>
        <KM evidence="1">114 uM for 2,7,4'-trihydroxyisoflavanone (at pH 7.5 and 30 degrees Celsius)</KM>
        <KM evidence="1">170 uM for 2,5,7,4'-tetrahydroxyisoflavanone (at pH 7.5 and 30 degrees Celsius)</KM>
        <text>kcat is 1.6 sec(-1) with 2,7-dihydroxy-4'-methoxyisoflavanone, 5.3 sec(-1) with 2,7,4'-trihydroxyisoflavanone and 18.1 sec(-1) with 2,5,7,4'-tetrahydroxyisoflavanone as substrates, respectively (at pH 7.5 and 30 degrees Celsius).</text>
    </kinetics>
</comment>
<comment type="pathway">
    <text>Secondary metabolite biosynthesis; flavonoid biosynthesis.</text>
</comment>
<comment type="similarity">
    <text evidence="2">Belongs to the 'GDXG' lipolytic enzyme family.</text>
</comment>
<organism>
    <name type="scientific">Glycine max</name>
    <name type="common">Soybean</name>
    <name type="synonym">Glycine hispida</name>
    <dbReference type="NCBI Taxonomy" id="3847"/>
    <lineage>
        <taxon>Eukaryota</taxon>
        <taxon>Viridiplantae</taxon>
        <taxon>Streptophyta</taxon>
        <taxon>Embryophyta</taxon>
        <taxon>Tracheophyta</taxon>
        <taxon>Spermatophyta</taxon>
        <taxon>Magnoliopsida</taxon>
        <taxon>eudicotyledons</taxon>
        <taxon>Gunneridae</taxon>
        <taxon>Pentapetalae</taxon>
        <taxon>rosids</taxon>
        <taxon>fabids</taxon>
        <taxon>Fabales</taxon>
        <taxon>Fabaceae</taxon>
        <taxon>Papilionoideae</taxon>
        <taxon>50 kb inversion clade</taxon>
        <taxon>NPAAA clade</taxon>
        <taxon>indigoferoid/millettioid clade</taxon>
        <taxon>Phaseoleae</taxon>
        <taxon>Glycine</taxon>
        <taxon>Glycine subgen. Soja</taxon>
    </lineage>
</organism>
<gene>
    <name type="primary">HIDH</name>
    <name type="ordered locus">Glyma01g45020</name>
</gene>